<dbReference type="EC" id="2.1.2.1" evidence="1"/>
<dbReference type="EMBL" id="CP001103">
    <property type="protein sequence ID" value="AEA97183.1"/>
    <property type="molecule type" value="Genomic_DNA"/>
</dbReference>
<dbReference type="EMBL" id="CP001103">
    <property type="protein sequence ID" value="AEA98628.1"/>
    <property type="molecule type" value="Genomic_DNA"/>
</dbReference>
<dbReference type="SMR" id="B4RV95"/>
<dbReference type="KEGG" id="amc:MADE_1012460"/>
<dbReference type="HOGENOM" id="CLU_022477_2_1_6"/>
<dbReference type="UniPathway" id="UPA00193"/>
<dbReference type="UniPathway" id="UPA00288">
    <property type="reaction ID" value="UER01023"/>
</dbReference>
<dbReference type="Proteomes" id="UP000001870">
    <property type="component" value="Chromosome"/>
</dbReference>
<dbReference type="GO" id="GO:0005829">
    <property type="term" value="C:cytosol"/>
    <property type="evidence" value="ECO:0007669"/>
    <property type="project" value="TreeGrafter"/>
</dbReference>
<dbReference type="GO" id="GO:0004372">
    <property type="term" value="F:glycine hydroxymethyltransferase activity"/>
    <property type="evidence" value="ECO:0007669"/>
    <property type="project" value="UniProtKB-UniRule"/>
</dbReference>
<dbReference type="GO" id="GO:0030170">
    <property type="term" value="F:pyridoxal phosphate binding"/>
    <property type="evidence" value="ECO:0007669"/>
    <property type="project" value="UniProtKB-UniRule"/>
</dbReference>
<dbReference type="GO" id="GO:0019264">
    <property type="term" value="P:glycine biosynthetic process from serine"/>
    <property type="evidence" value="ECO:0007669"/>
    <property type="project" value="UniProtKB-UniRule"/>
</dbReference>
<dbReference type="GO" id="GO:0035999">
    <property type="term" value="P:tetrahydrofolate interconversion"/>
    <property type="evidence" value="ECO:0007669"/>
    <property type="project" value="UniProtKB-UniRule"/>
</dbReference>
<dbReference type="CDD" id="cd00378">
    <property type="entry name" value="SHMT"/>
    <property type="match status" value="1"/>
</dbReference>
<dbReference type="FunFam" id="3.40.640.10:FF:000001">
    <property type="entry name" value="Serine hydroxymethyltransferase"/>
    <property type="match status" value="1"/>
</dbReference>
<dbReference type="FunFam" id="3.90.1150.10:FF:000003">
    <property type="entry name" value="Serine hydroxymethyltransferase"/>
    <property type="match status" value="1"/>
</dbReference>
<dbReference type="Gene3D" id="3.90.1150.10">
    <property type="entry name" value="Aspartate Aminotransferase, domain 1"/>
    <property type="match status" value="1"/>
</dbReference>
<dbReference type="Gene3D" id="3.40.640.10">
    <property type="entry name" value="Type I PLP-dependent aspartate aminotransferase-like (Major domain)"/>
    <property type="match status" value="1"/>
</dbReference>
<dbReference type="HAMAP" id="MF_00051">
    <property type="entry name" value="SHMT"/>
    <property type="match status" value="1"/>
</dbReference>
<dbReference type="InterPro" id="IPR015424">
    <property type="entry name" value="PyrdxlP-dep_Trfase"/>
</dbReference>
<dbReference type="InterPro" id="IPR015421">
    <property type="entry name" value="PyrdxlP-dep_Trfase_major"/>
</dbReference>
<dbReference type="InterPro" id="IPR015422">
    <property type="entry name" value="PyrdxlP-dep_Trfase_small"/>
</dbReference>
<dbReference type="InterPro" id="IPR001085">
    <property type="entry name" value="Ser_HO-MeTrfase"/>
</dbReference>
<dbReference type="InterPro" id="IPR049943">
    <property type="entry name" value="Ser_HO-MeTrfase-like"/>
</dbReference>
<dbReference type="InterPro" id="IPR019798">
    <property type="entry name" value="Ser_HO-MeTrfase_PLP_BS"/>
</dbReference>
<dbReference type="InterPro" id="IPR039429">
    <property type="entry name" value="SHMT-like_dom"/>
</dbReference>
<dbReference type="NCBIfam" id="NF000586">
    <property type="entry name" value="PRK00011.1"/>
    <property type="match status" value="1"/>
</dbReference>
<dbReference type="PANTHER" id="PTHR11680">
    <property type="entry name" value="SERINE HYDROXYMETHYLTRANSFERASE"/>
    <property type="match status" value="1"/>
</dbReference>
<dbReference type="PANTHER" id="PTHR11680:SF50">
    <property type="entry name" value="SERINE HYDROXYMETHYLTRANSFERASE"/>
    <property type="match status" value="1"/>
</dbReference>
<dbReference type="Pfam" id="PF00464">
    <property type="entry name" value="SHMT"/>
    <property type="match status" value="1"/>
</dbReference>
<dbReference type="PIRSF" id="PIRSF000412">
    <property type="entry name" value="SHMT"/>
    <property type="match status" value="1"/>
</dbReference>
<dbReference type="SUPFAM" id="SSF53383">
    <property type="entry name" value="PLP-dependent transferases"/>
    <property type="match status" value="1"/>
</dbReference>
<dbReference type="PROSITE" id="PS00096">
    <property type="entry name" value="SHMT"/>
    <property type="match status" value="1"/>
</dbReference>
<proteinExistence type="inferred from homology"/>
<sequence length="418" mass="45095">MFSREMNIADFDPELANAMANEVERQEHHIELIASENYCSPRVMEAQGSQLTNKYAEGYPGKRYYGGCEHVDVVEQLAIDRAKELFGADYANVQPHAGSQANSAVFMALLDAGDTVLGMSLSEGGHLTHGSHVNFSGKTYNAVQYGLDKETGEIDYAQVEALAKEHKPKMIIGGFSAYSGIVDWAKFREIADSVGAYLLVDMAHVAGLVAAGVYPNPLPHAHVVTTTTHKTLAGPRSGLILSSCGDEAIYKKLNSSVFPGNQGGPLCHVIAAKAVAFKEALQPEFKAYQQQVVANAKAMVSVMQERGYNIVSGGTDNHLFLLDLIDKDITGKDADAALGAANITVNKNSVPNDPRSPFVTSGLRIGSPAITRRGFKEEQAKQVATWICDILDNMGDESVIKRVQSEVVALCAQFPVYK</sequence>
<feature type="chain" id="PRO_1000091513" description="Serine hydroxymethyltransferase">
    <location>
        <begin position="1"/>
        <end position="418"/>
    </location>
</feature>
<feature type="binding site" evidence="1">
    <location>
        <position position="121"/>
    </location>
    <ligand>
        <name>(6S)-5,6,7,8-tetrahydrofolate</name>
        <dbReference type="ChEBI" id="CHEBI:57453"/>
    </ligand>
</feature>
<feature type="binding site" evidence="1">
    <location>
        <begin position="125"/>
        <end position="127"/>
    </location>
    <ligand>
        <name>(6S)-5,6,7,8-tetrahydrofolate</name>
        <dbReference type="ChEBI" id="CHEBI:57453"/>
    </ligand>
</feature>
<feature type="binding site" evidence="1">
    <location>
        <begin position="356"/>
        <end position="358"/>
    </location>
    <ligand>
        <name>(6S)-5,6,7,8-tetrahydrofolate</name>
        <dbReference type="ChEBI" id="CHEBI:57453"/>
    </ligand>
</feature>
<feature type="site" description="Plays an important role in substrate specificity" evidence="1">
    <location>
        <position position="229"/>
    </location>
</feature>
<feature type="modified residue" description="N6-(pyridoxal phosphate)lysine" evidence="1">
    <location>
        <position position="230"/>
    </location>
</feature>
<organism>
    <name type="scientific">Alteromonas mediterranea (strain DSM 17117 / CIP 110805 / LMG 28347 / Deep ecotype)</name>
    <dbReference type="NCBI Taxonomy" id="1774373"/>
    <lineage>
        <taxon>Bacteria</taxon>
        <taxon>Pseudomonadati</taxon>
        <taxon>Pseudomonadota</taxon>
        <taxon>Gammaproteobacteria</taxon>
        <taxon>Alteromonadales</taxon>
        <taxon>Alteromonadaceae</taxon>
        <taxon>Alteromonas/Salinimonas group</taxon>
        <taxon>Alteromonas</taxon>
    </lineage>
</organism>
<protein>
    <recommendedName>
        <fullName evidence="1">Serine hydroxymethyltransferase</fullName>
        <shortName evidence="1">SHMT</shortName>
        <shortName evidence="1">Serine methylase</shortName>
        <ecNumber evidence="1">2.1.2.1</ecNumber>
    </recommendedName>
</protein>
<comment type="function">
    <text evidence="1">Catalyzes the reversible interconversion of serine and glycine with tetrahydrofolate (THF) serving as the one-carbon carrier. This reaction serves as the major source of one-carbon groups required for the biosynthesis of purines, thymidylate, methionine, and other important biomolecules. Also exhibits THF-independent aldolase activity toward beta-hydroxyamino acids, producing glycine and aldehydes, via a retro-aldol mechanism.</text>
</comment>
<comment type="catalytic activity">
    <reaction evidence="1">
        <text>(6R)-5,10-methylene-5,6,7,8-tetrahydrofolate + glycine + H2O = (6S)-5,6,7,8-tetrahydrofolate + L-serine</text>
        <dbReference type="Rhea" id="RHEA:15481"/>
        <dbReference type="ChEBI" id="CHEBI:15377"/>
        <dbReference type="ChEBI" id="CHEBI:15636"/>
        <dbReference type="ChEBI" id="CHEBI:33384"/>
        <dbReference type="ChEBI" id="CHEBI:57305"/>
        <dbReference type="ChEBI" id="CHEBI:57453"/>
        <dbReference type="EC" id="2.1.2.1"/>
    </reaction>
</comment>
<comment type="cofactor">
    <cofactor evidence="1">
        <name>pyridoxal 5'-phosphate</name>
        <dbReference type="ChEBI" id="CHEBI:597326"/>
    </cofactor>
</comment>
<comment type="pathway">
    <text evidence="1">One-carbon metabolism; tetrahydrofolate interconversion.</text>
</comment>
<comment type="pathway">
    <text evidence="1">Amino-acid biosynthesis; glycine biosynthesis; glycine from L-serine: step 1/1.</text>
</comment>
<comment type="subunit">
    <text evidence="1">Homodimer.</text>
</comment>
<comment type="subcellular location">
    <subcellularLocation>
        <location evidence="1">Cytoplasm</location>
    </subcellularLocation>
</comment>
<comment type="similarity">
    <text evidence="1">Belongs to the SHMT family.</text>
</comment>
<keyword id="KW-0028">Amino-acid biosynthesis</keyword>
<keyword id="KW-0963">Cytoplasm</keyword>
<keyword id="KW-0554">One-carbon metabolism</keyword>
<keyword id="KW-0663">Pyridoxal phosphate</keyword>
<keyword id="KW-0808">Transferase</keyword>
<gene>
    <name evidence="1" type="primary">glyA1</name>
    <name type="ordered locus">MADE_1005185</name>
</gene>
<gene>
    <name evidence="1" type="primary">glyA2</name>
    <name type="ordered locus">MADE_1012460</name>
</gene>
<evidence type="ECO:0000255" key="1">
    <source>
        <dbReference type="HAMAP-Rule" id="MF_00051"/>
    </source>
</evidence>
<accession>B4RV95</accession>
<accession>F2G249</accession>
<reference key="1">
    <citation type="journal article" date="2008" name="ISME J.">
        <title>Comparative genomics of two ecotypes of the marine planktonic copiotroph Alteromonas macleodii suggests alternative lifestyles associated with different kinds of particulate organic matter.</title>
        <authorList>
            <person name="Ivars-Martinez E."/>
            <person name="Martin-Cuadrado A.-B."/>
            <person name="D'Auria G."/>
            <person name="Mira A."/>
            <person name="Ferriera S."/>
            <person name="Johnson J."/>
            <person name="Friedman R."/>
            <person name="Rodriguez-Valera F."/>
        </authorList>
    </citation>
    <scope>NUCLEOTIDE SEQUENCE [LARGE SCALE GENOMIC DNA]</scope>
    <source>
        <strain>DSM 17117 / CIP 110805 / LMG 28347 / Deep ecotype</strain>
    </source>
</reference>
<name>GLYA_ALTMD</name>